<sequence>MARTMAEKVWEEHVVRRAEGEPDLLYIDLHLIHEVTSPQAFEGLRLANRKLRRPDLTIATEDHNVPTENIFLPIADPVSRTQVETLRKNAAEFGVRLHPMGDIDQGIVHVIGPQLGLTQPGMTIVCGDSHTSTHGAFGALAFGIGTSQVEHVMATQTLPMTPFKTMAVNVEGKLKPGVTAKDIILAVIAQIGTGGGQGHVIEYRGEAIRSLSMEARMTICNMSIEAGARAGMIAPDQTTFDYLKGRPHAPKGELWDQAVEYWKTLPTDEGAVFDKEVFLNADELSPFVTWGTNPGQGVPLDSVVPDPESFTDPVERAAAEKALAYMDLKPGTRMRDIKIDTVFLGSCTNGRIEDLRAAAEVLKGRKVADGVRMLVVPGSQRVKQQAAAEGLDEIFKAAGAEWREAGCSMCLGMNPDTLKPGERSASTSNRNFEGRQGKGGRTHLVSPLVAAATAVRGTLSSPADL</sequence>
<evidence type="ECO:0000255" key="1">
    <source>
        <dbReference type="HAMAP-Rule" id="MF_01026"/>
    </source>
</evidence>
<evidence type="ECO:0000256" key="2">
    <source>
        <dbReference type="SAM" id="MobiDB-lite"/>
    </source>
</evidence>
<dbReference type="EC" id="4.2.1.33" evidence="1"/>
<dbReference type="EMBL" id="CP000088">
    <property type="protein sequence ID" value="AAZ54664.1"/>
    <property type="molecule type" value="Genomic_DNA"/>
</dbReference>
<dbReference type="RefSeq" id="WP_011291073.1">
    <property type="nucleotide sequence ID" value="NC_007333.1"/>
</dbReference>
<dbReference type="SMR" id="Q47SA3"/>
<dbReference type="STRING" id="269800.Tfu_0626"/>
<dbReference type="KEGG" id="tfu:Tfu_0626"/>
<dbReference type="eggNOG" id="COG0065">
    <property type="taxonomic scope" value="Bacteria"/>
</dbReference>
<dbReference type="HOGENOM" id="CLU_006714_3_4_11"/>
<dbReference type="OrthoDB" id="9802769at2"/>
<dbReference type="UniPathway" id="UPA00048">
    <property type="reaction ID" value="UER00071"/>
</dbReference>
<dbReference type="GO" id="GO:0003861">
    <property type="term" value="F:3-isopropylmalate dehydratase activity"/>
    <property type="evidence" value="ECO:0007669"/>
    <property type="project" value="UniProtKB-UniRule"/>
</dbReference>
<dbReference type="GO" id="GO:0051539">
    <property type="term" value="F:4 iron, 4 sulfur cluster binding"/>
    <property type="evidence" value="ECO:0007669"/>
    <property type="project" value="UniProtKB-KW"/>
</dbReference>
<dbReference type="GO" id="GO:0046872">
    <property type="term" value="F:metal ion binding"/>
    <property type="evidence" value="ECO:0007669"/>
    <property type="project" value="UniProtKB-KW"/>
</dbReference>
<dbReference type="GO" id="GO:0009098">
    <property type="term" value="P:L-leucine biosynthetic process"/>
    <property type="evidence" value="ECO:0007669"/>
    <property type="project" value="UniProtKB-UniRule"/>
</dbReference>
<dbReference type="CDD" id="cd01583">
    <property type="entry name" value="IPMI"/>
    <property type="match status" value="1"/>
</dbReference>
<dbReference type="FunFam" id="3.30.499.10:FF:000007">
    <property type="entry name" value="3-isopropylmalate dehydratase large subunit"/>
    <property type="match status" value="1"/>
</dbReference>
<dbReference type="Gene3D" id="3.30.499.10">
    <property type="entry name" value="Aconitase, domain 3"/>
    <property type="match status" value="2"/>
</dbReference>
<dbReference type="HAMAP" id="MF_01026">
    <property type="entry name" value="LeuC_type1"/>
    <property type="match status" value="1"/>
</dbReference>
<dbReference type="InterPro" id="IPR004430">
    <property type="entry name" value="3-IsopropMal_deHydase_lsu"/>
</dbReference>
<dbReference type="InterPro" id="IPR015931">
    <property type="entry name" value="Acnase/IPM_dHydase_lsu_aba_1/3"/>
</dbReference>
<dbReference type="InterPro" id="IPR001030">
    <property type="entry name" value="Acoase/IPM_deHydtase_lsu_aba"/>
</dbReference>
<dbReference type="InterPro" id="IPR018136">
    <property type="entry name" value="Aconitase_4Fe-4S_BS"/>
</dbReference>
<dbReference type="InterPro" id="IPR036008">
    <property type="entry name" value="Aconitase_4Fe-4S_dom"/>
</dbReference>
<dbReference type="InterPro" id="IPR050067">
    <property type="entry name" value="IPM_dehydratase_rel_enz"/>
</dbReference>
<dbReference type="InterPro" id="IPR033941">
    <property type="entry name" value="IPMI_cat"/>
</dbReference>
<dbReference type="NCBIfam" id="TIGR00170">
    <property type="entry name" value="leuC"/>
    <property type="match status" value="1"/>
</dbReference>
<dbReference type="NCBIfam" id="NF004016">
    <property type="entry name" value="PRK05478.1"/>
    <property type="match status" value="1"/>
</dbReference>
<dbReference type="NCBIfam" id="NF009116">
    <property type="entry name" value="PRK12466.1"/>
    <property type="match status" value="1"/>
</dbReference>
<dbReference type="PANTHER" id="PTHR43822:SF9">
    <property type="entry name" value="3-ISOPROPYLMALATE DEHYDRATASE"/>
    <property type="match status" value="1"/>
</dbReference>
<dbReference type="PANTHER" id="PTHR43822">
    <property type="entry name" value="HOMOACONITASE, MITOCHONDRIAL-RELATED"/>
    <property type="match status" value="1"/>
</dbReference>
<dbReference type="Pfam" id="PF00330">
    <property type="entry name" value="Aconitase"/>
    <property type="match status" value="1"/>
</dbReference>
<dbReference type="PRINTS" id="PR00415">
    <property type="entry name" value="ACONITASE"/>
</dbReference>
<dbReference type="SUPFAM" id="SSF53732">
    <property type="entry name" value="Aconitase iron-sulfur domain"/>
    <property type="match status" value="1"/>
</dbReference>
<dbReference type="PROSITE" id="PS00450">
    <property type="entry name" value="ACONITASE_1"/>
    <property type="match status" value="1"/>
</dbReference>
<dbReference type="PROSITE" id="PS01244">
    <property type="entry name" value="ACONITASE_2"/>
    <property type="match status" value="1"/>
</dbReference>
<gene>
    <name evidence="1" type="primary">leuC</name>
    <name type="ordered locus">Tfu_0626</name>
</gene>
<comment type="function">
    <text evidence="1">Catalyzes the isomerization between 2-isopropylmalate and 3-isopropylmalate, via the formation of 2-isopropylmaleate.</text>
</comment>
<comment type="catalytic activity">
    <reaction evidence="1">
        <text>(2R,3S)-3-isopropylmalate = (2S)-2-isopropylmalate</text>
        <dbReference type="Rhea" id="RHEA:32287"/>
        <dbReference type="ChEBI" id="CHEBI:1178"/>
        <dbReference type="ChEBI" id="CHEBI:35121"/>
        <dbReference type="EC" id="4.2.1.33"/>
    </reaction>
</comment>
<comment type="cofactor">
    <cofactor evidence="1">
        <name>[4Fe-4S] cluster</name>
        <dbReference type="ChEBI" id="CHEBI:49883"/>
    </cofactor>
    <text evidence="1">Binds 1 [4Fe-4S] cluster per subunit.</text>
</comment>
<comment type="pathway">
    <text evidence="1">Amino-acid biosynthesis; L-leucine biosynthesis; L-leucine from 3-methyl-2-oxobutanoate: step 2/4.</text>
</comment>
<comment type="subunit">
    <text evidence="1">Heterodimer of LeuC and LeuD.</text>
</comment>
<comment type="similarity">
    <text evidence="1">Belongs to the aconitase/IPM isomerase family. LeuC type 1 subfamily.</text>
</comment>
<reference key="1">
    <citation type="journal article" date="2007" name="J. Bacteriol.">
        <title>Genome sequence and analysis of the soil cellulolytic actinomycete Thermobifida fusca YX.</title>
        <authorList>
            <person name="Lykidis A."/>
            <person name="Mavromatis K."/>
            <person name="Ivanova N."/>
            <person name="Anderson I."/>
            <person name="Land M."/>
            <person name="DiBartolo G."/>
            <person name="Martinez M."/>
            <person name="Lapidus A."/>
            <person name="Lucas S."/>
            <person name="Copeland A."/>
            <person name="Richardson P."/>
            <person name="Wilson D.B."/>
            <person name="Kyrpides N."/>
        </authorList>
    </citation>
    <scope>NUCLEOTIDE SEQUENCE [LARGE SCALE GENOMIC DNA]</scope>
    <source>
        <strain>YX</strain>
    </source>
</reference>
<keyword id="KW-0004">4Fe-4S</keyword>
<keyword id="KW-0028">Amino-acid biosynthesis</keyword>
<keyword id="KW-0100">Branched-chain amino acid biosynthesis</keyword>
<keyword id="KW-0408">Iron</keyword>
<keyword id="KW-0411">Iron-sulfur</keyword>
<keyword id="KW-0432">Leucine biosynthesis</keyword>
<keyword id="KW-0456">Lyase</keyword>
<keyword id="KW-0479">Metal-binding</keyword>
<proteinExistence type="inferred from homology"/>
<accession>Q47SA3</accession>
<feature type="chain" id="PRO_0000076832" description="3-isopropylmalate dehydratase large subunit">
    <location>
        <begin position="1"/>
        <end position="465"/>
    </location>
</feature>
<feature type="region of interest" description="Disordered" evidence="2">
    <location>
        <begin position="417"/>
        <end position="443"/>
    </location>
</feature>
<feature type="binding site" evidence="1">
    <location>
        <position position="347"/>
    </location>
    <ligand>
        <name>[4Fe-4S] cluster</name>
        <dbReference type="ChEBI" id="CHEBI:49883"/>
    </ligand>
</feature>
<feature type="binding site" evidence="1">
    <location>
        <position position="407"/>
    </location>
    <ligand>
        <name>[4Fe-4S] cluster</name>
        <dbReference type="ChEBI" id="CHEBI:49883"/>
    </ligand>
</feature>
<feature type="binding site" evidence="1">
    <location>
        <position position="410"/>
    </location>
    <ligand>
        <name>[4Fe-4S] cluster</name>
        <dbReference type="ChEBI" id="CHEBI:49883"/>
    </ligand>
</feature>
<protein>
    <recommendedName>
        <fullName evidence="1">3-isopropylmalate dehydratase large subunit</fullName>
        <ecNumber evidence="1">4.2.1.33</ecNumber>
    </recommendedName>
    <alternativeName>
        <fullName evidence="1">Alpha-IPM isomerase</fullName>
        <shortName evidence="1">IPMI</shortName>
    </alternativeName>
    <alternativeName>
        <fullName evidence="1">Isopropylmalate isomerase</fullName>
    </alternativeName>
</protein>
<name>LEUC_THEFY</name>
<organism>
    <name type="scientific">Thermobifida fusca (strain YX)</name>
    <dbReference type="NCBI Taxonomy" id="269800"/>
    <lineage>
        <taxon>Bacteria</taxon>
        <taxon>Bacillati</taxon>
        <taxon>Actinomycetota</taxon>
        <taxon>Actinomycetes</taxon>
        <taxon>Streptosporangiales</taxon>
        <taxon>Nocardiopsidaceae</taxon>
        <taxon>Thermobifida</taxon>
    </lineage>
</organism>